<keyword id="KW-1003">Cell membrane</keyword>
<keyword id="KW-0134">Cell wall</keyword>
<keyword id="KW-0175">Coiled coil</keyword>
<keyword id="KW-0903">Direct protein sequencing</keyword>
<keyword id="KW-0472">Membrane</keyword>
<keyword id="KW-1185">Reference proteome</keyword>
<keyword id="KW-0701">S-layer</keyword>
<keyword id="KW-0964">Secreted</keyword>
<keyword id="KW-0732">Signal</keyword>
<keyword id="KW-0812">Transmembrane</keyword>
<keyword id="KW-1133">Transmembrane helix</keyword>
<dbReference type="EMBL" id="AE006641">
    <property type="protein sequence ID" value="AAK40717.1"/>
    <property type="molecule type" value="Genomic_DNA"/>
</dbReference>
<dbReference type="PIR" id="F90182">
    <property type="entry name" value="F90182"/>
</dbReference>
<dbReference type="RefSeq" id="WP_010922961.1">
    <property type="nucleotide sequence ID" value="NC_002754.1"/>
</dbReference>
<dbReference type="SMR" id="Q980C6"/>
<dbReference type="STRING" id="273057.SSO0390"/>
<dbReference type="PaxDb" id="273057-SSO0390"/>
<dbReference type="EnsemblBacteria" id="AAK40717">
    <property type="protein sequence ID" value="AAK40717"/>
    <property type="gene ID" value="SSO0390"/>
</dbReference>
<dbReference type="GeneID" id="44129367"/>
<dbReference type="KEGG" id="sso:SSO0390"/>
<dbReference type="PATRIC" id="fig|273057.12.peg.384"/>
<dbReference type="eggNOG" id="arCOG07272">
    <property type="taxonomic scope" value="Archaea"/>
</dbReference>
<dbReference type="HOGENOM" id="CLU_697598_0_0_2"/>
<dbReference type="InParanoid" id="Q980C6"/>
<dbReference type="Proteomes" id="UP000001974">
    <property type="component" value="Chromosome"/>
</dbReference>
<dbReference type="GO" id="GO:0005576">
    <property type="term" value="C:extracellular region"/>
    <property type="evidence" value="ECO:0007669"/>
    <property type="project" value="UniProtKB-KW"/>
</dbReference>
<dbReference type="GO" id="GO:0005886">
    <property type="term" value="C:plasma membrane"/>
    <property type="evidence" value="ECO:0007669"/>
    <property type="project" value="UniProtKB-SubCell"/>
</dbReference>
<dbReference type="GO" id="GO:0030115">
    <property type="term" value="C:S-layer"/>
    <property type="evidence" value="ECO:0007669"/>
    <property type="project" value="UniProtKB-SubCell"/>
</dbReference>
<dbReference type="Gene3D" id="1.20.5.340">
    <property type="match status" value="2"/>
</dbReference>
<dbReference type="SUPFAM" id="SSF58100">
    <property type="entry name" value="Bacterial hemolysins"/>
    <property type="match status" value="1"/>
</dbReference>
<proteinExistence type="evidence at protein level"/>
<sequence>MVVKKTFVLSTLILISVVALVSTAVYTSGNVTFYSPSVNNQIYYVGKSVTIDAVVPQQFAGQGAVINLFFPNSTLAASIPTTVNATGGIYVPNAYTFPHVIGIWQITVEVTGGVAVGTIDVNVTTPAVAPIILTLQNLAMYENTYPQFIEFANGIITSVVMQNGTVNIMGYVYNSTVGPLSGATVSLTLNIPTVGTKTLSTTTASNGSFMLSFQVPQLSTTLTLISSYLISGSLTVSYGVHTVTYNVFITAIPNYLSVINALNNEVSTLRSEISSLNSTIASLNKSLANANTQISNLQSEITTLNSEIGKLNSTVGSLSTQLSSLSSQYNTLSSQVTALNGKISNLSTSLSTLNGEVASLRSTVSSLTTIAYGGIIAGIIGLIVAIVAIVLVMRRIS</sequence>
<comment type="function">
    <text evidence="2">S-layer small protein. May anchor the complex to the cell membrane.</text>
</comment>
<comment type="subunit">
    <text evidence="5">The mushroom-shaped unit cells of the Sulfolobales' S-layers may consist of three SlaB subunits and six SlaA subunits.</text>
</comment>
<comment type="subcellular location">
    <subcellularLocation>
        <location evidence="5">Secreted</location>
        <location evidence="5">Cell wall</location>
        <location evidence="5">S-layer</location>
    </subcellularLocation>
    <subcellularLocation>
        <location evidence="1">Cell membrane</location>
        <topology evidence="1">Single-pass membrane protein</topology>
    </subcellularLocation>
</comment>
<comment type="induction">
    <text evidence="2">Constitutively expressed.</text>
</comment>
<comment type="domain">
    <text evidence="2">Composed of consecutive beta sandwich domains, a coiled-coil domain and a C-terminal transmembrane helix.</text>
</comment>
<comment type="similarity">
    <text evidence="4">Belongs to the Sulfolobales SlaB family.</text>
</comment>
<organism>
    <name type="scientific">Saccharolobus solfataricus (strain ATCC 35092 / DSM 1617 / JCM 11322 / P2)</name>
    <name type="common">Sulfolobus solfataricus</name>
    <dbReference type="NCBI Taxonomy" id="273057"/>
    <lineage>
        <taxon>Archaea</taxon>
        <taxon>Thermoproteota</taxon>
        <taxon>Thermoprotei</taxon>
        <taxon>Sulfolobales</taxon>
        <taxon>Sulfolobaceae</taxon>
        <taxon>Saccharolobus</taxon>
    </lineage>
</organism>
<reference key="1">
    <citation type="journal article" date="2001" name="Proc. Natl. Acad. Sci. U.S.A.">
        <title>The complete genome of the crenarchaeon Sulfolobus solfataricus P2.</title>
        <authorList>
            <person name="She Q."/>
            <person name="Singh R.K."/>
            <person name="Confalonieri F."/>
            <person name="Zivanovic Y."/>
            <person name="Allard G."/>
            <person name="Awayez M.J."/>
            <person name="Chan-Weiher C.C.-Y."/>
            <person name="Clausen I.G."/>
            <person name="Curtis B.A."/>
            <person name="De Moors A."/>
            <person name="Erauso G."/>
            <person name="Fletcher C."/>
            <person name="Gordon P.M.K."/>
            <person name="Heikamp-de Jong I."/>
            <person name="Jeffries A.C."/>
            <person name="Kozera C.J."/>
            <person name="Medina N."/>
            <person name="Peng X."/>
            <person name="Thi-Ngoc H.P."/>
            <person name="Redder P."/>
            <person name="Schenk M.E."/>
            <person name="Theriault C."/>
            <person name="Tolstrup N."/>
            <person name="Charlebois R.L."/>
            <person name="Doolittle W.F."/>
            <person name="Duguet M."/>
            <person name="Gaasterland T."/>
            <person name="Garrett R.A."/>
            <person name="Ragan M.A."/>
            <person name="Sensen C.W."/>
            <person name="Van der Oost J."/>
        </authorList>
    </citation>
    <scope>NUCLEOTIDE SEQUENCE [LARGE SCALE GENOMIC DNA]</scope>
    <source>
        <strain>ATCC 35092 / DSM 1617 / JCM 11322 / P2</strain>
    </source>
</reference>
<reference key="2">
    <citation type="journal article" date="2009" name="Mol. Microbiol.">
        <title>Acidianus, Sulfolobus and Metallosphaera surface layers: structure, composition and gene expression.</title>
        <authorList>
            <person name="Veith A."/>
            <person name="Klingl A."/>
            <person name="Zolghadr B."/>
            <person name="Lauber K."/>
            <person name="Mentele R."/>
            <person name="Lottspeich F."/>
            <person name="Rachel R."/>
            <person name="Albers S.V."/>
            <person name="Kletzin A."/>
        </authorList>
    </citation>
    <scope>PROTEIN SEQUENCE OF 25-31</scope>
    <scope>FUNCTION</scope>
    <scope>SUBUNIT</scope>
    <scope>SUBCELLULAR LOCATION</scope>
    <scope>INDUCTION</scope>
    <scope>DOMAIN</scope>
    <source>
        <strain>ATCC 35092 / DSM 1617 / JCM 11322 / P2</strain>
    </source>
</reference>
<name>SLAB_SACS2</name>
<feature type="signal peptide" evidence="2">
    <location>
        <begin position="1"/>
        <end position="24"/>
    </location>
</feature>
<feature type="chain" id="PRO_0000444055" description="S-layer protein B">
    <location>
        <begin position="25"/>
        <end position="397"/>
    </location>
</feature>
<feature type="transmembrane region" description="Helical" evidence="1">
    <location>
        <begin position="373"/>
        <end position="393"/>
    </location>
</feature>
<feature type="coiled-coil region" evidence="1">
    <location>
        <begin position="259"/>
        <end position="314"/>
    </location>
</feature>
<evidence type="ECO:0000255" key="1"/>
<evidence type="ECO:0000269" key="2">
    <source>
    </source>
</evidence>
<evidence type="ECO:0000303" key="3">
    <source>
    </source>
</evidence>
<evidence type="ECO:0000305" key="4"/>
<evidence type="ECO:0000305" key="5">
    <source>
    </source>
</evidence>
<evidence type="ECO:0000312" key="6">
    <source>
        <dbReference type="EMBL" id="AAK40717.1"/>
    </source>
</evidence>
<gene>
    <name evidence="3" type="primary">slaB</name>
    <name evidence="6" type="ordered locus">SSO0390</name>
</gene>
<protein>
    <recommendedName>
        <fullName evidence="3">S-layer protein B</fullName>
    </recommendedName>
    <alternativeName>
        <fullName evidence="4">Surface layer small protein</fullName>
    </alternativeName>
</protein>
<accession>Q980C6</accession>